<protein>
    <recommendedName>
        <fullName>Protein QmcA</fullName>
    </recommendedName>
</protein>
<keyword id="KW-0472">Membrane</keyword>
<keyword id="KW-1185">Reference proteome</keyword>
<keyword id="KW-0812">Transmembrane</keyword>
<keyword id="KW-1133">Transmembrane helix</keyword>
<dbReference type="EMBL" id="AE005174">
    <property type="protein sequence ID" value="AAG54846.1"/>
    <property type="molecule type" value="Genomic_DNA"/>
</dbReference>
<dbReference type="EMBL" id="BA000007">
    <property type="protein sequence ID" value="BAB33975.1"/>
    <property type="molecule type" value="Genomic_DNA"/>
</dbReference>
<dbReference type="PIR" id="B85548">
    <property type="entry name" value="B85548"/>
</dbReference>
<dbReference type="PIR" id="H90697">
    <property type="entry name" value="H90697"/>
</dbReference>
<dbReference type="RefSeq" id="NP_308579.1">
    <property type="nucleotide sequence ID" value="NC_002695.1"/>
</dbReference>
<dbReference type="RefSeq" id="WP_000904502.1">
    <property type="nucleotide sequence ID" value="NZ_VOAI01000005.1"/>
</dbReference>
<dbReference type="SMR" id="P0AA55"/>
<dbReference type="STRING" id="155864.Z0642"/>
<dbReference type="GeneID" id="915340"/>
<dbReference type="KEGG" id="ece:Z0642"/>
<dbReference type="KEGG" id="ecs:ECs_0552"/>
<dbReference type="PATRIC" id="fig|386585.9.peg.659"/>
<dbReference type="eggNOG" id="COG0330">
    <property type="taxonomic scope" value="Bacteria"/>
</dbReference>
<dbReference type="HOGENOM" id="CLU_024949_2_2_6"/>
<dbReference type="OMA" id="YLQMLPK"/>
<dbReference type="Proteomes" id="UP000000558">
    <property type="component" value="Chromosome"/>
</dbReference>
<dbReference type="Proteomes" id="UP000002519">
    <property type="component" value="Chromosome"/>
</dbReference>
<dbReference type="GO" id="GO:0016020">
    <property type="term" value="C:membrane"/>
    <property type="evidence" value="ECO:0007669"/>
    <property type="project" value="UniProtKB-SubCell"/>
</dbReference>
<dbReference type="CDD" id="cd08829">
    <property type="entry name" value="SPFH_paraslipin"/>
    <property type="match status" value="1"/>
</dbReference>
<dbReference type="FunFam" id="3.30.479.30:FF:000006">
    <property type="entry name" value="SPFH/Band 7/PHB domain protein"/>
    <property type="match status" value="1"/>
</dbReference>
<dbReference type="Gene3D" id="3.30.479.30">
    <property type="entry name" value="Band 7 domain"/>
    <property type="match status" value="1"/>
</dbReference>
<dbReference type="InterPro" id="IPR050710">
    <property type="entry name" value="Band7/mec-2_domain"/>
</dbReference>
<dbReference type="InterPro" id="IPR001107">
    <property type="entry name" value="Band_7"/>
</dbReference>
<dbReference type="InterPro" id="IPR036013">
    <property type="entry name" value="Band_7/SPFH_dom_sf"/>
</dbReference>
<dbReference type="InterPro" id="IPR018080">
    <property type="entry name" value="Band_7/stomatin-like_CS"/>
</dbReference>
<dbReference type="InterPro" id="IPR001972">
    <property type="entry name" value="Stomatin_HflK_fam"/>
</dbReference>
<dbReference type="PANTHER" id="PTHR43327">
    <property type="entry name" value="STOMATIN-LIKE PROTEIN 2, MITOCHONDRIAL"/>
    <property type="match status" value="1"/>
</dbReference>
<dbReference type="PANTHER" id="PTHR43327:SF10">
    <property type="entry name" value="STOMATIN-LIKE PROTEIN 2, MITOCHONDRIAL"/>
    <property type="match status" value="1"/>
</dbReference>
<dbReference type="Pfam" id="PF01145">
    <property type="entry name" value="Band_7"/>
    <property type="match status" value="1"/>
</dbReference>
<dbReference type="PRINTS" id="PR00721">
    <property type="entry name" value="STOMATIN"/>
</dbReference>
<dbReference type="SMART" id="SM00244">
    <property type="entry name" value="PHB"/>
    <property type="match status" value="1"/>
</dbReference>
<dbReference type="SUPFAM" id="SSF117892">
    <property type="entry name" value="Band 7/SPFH domain"/>
    <property type="match status" value="1"/>
</dbReference>
<dbReference type="PROSITE" id="PS01270">
    <property type="entry name" value="BAND_7"/>
    <property type="match status" value="1"/>
</dbReference>
<organism>
    <name type="scientific">Escherichia coli O157:H7</name>
    <dbReference type="NCBI Taxonomy" id="83334"/>
    <lineage>
        <taxon>Bacteria</taxon>
        <taxon>Pseudomonadati</taxon>
        <taxon>Pseudomonadota</taxon>
        <taxon>Gammaproteobacteria</taxon>
        <taxon>Enterobacterales</taxon>
        <taxon>Enterobacteriaceae</taxon>
        <taxon>Escherichia</taxon>
    </lineage>
</organism>
<proteinExistence type="inferred from homology"/>
<sequence length="305" mass="33743">MLIFIPILIFVALVIVGAGVKIVPQGYQWTVERFGRYTKTLQPGLSLVVPFMDRIGRKINMMEQVLDIPSQEVISKDNANVTIDAVCFIQVIDAPRAAYEVSNLELAIINLTMTNIRTVLGSMELDEMLSQRDSINSRLLRIVDEATNPWGIKVTRIEIRDVRPPAELISSMNAQMKAERTKRAYILEAEGIRQAEILKAEGEKQSQILKAEGERQSAFLQAEARERSAEAEARATKMVSEAIASGDIQAVNYFVAQKYTEALQQIGSSSNSKVVMMPLEASSLMGSIAGIAELVKDSANKRTQP</sequence>
<evidence type="ECO:0000255" key="1"/>
<evidence type="ECO:0000305" key="2"/>
<accession>P0AA55</accession>
<accession>P77367</accession>
<reference key="1">
    <citation type="journal article" date="2001" name="Nature">
        <title>Genome sequence of enterohaemorrhagic Escherichia coli O157:H7.</title>
        <authorList>
            <person name="Perna N.T."/>
            <person name="Plunkett G. III"/>
            <person name="Burland V."/>
            <person name="Mau B."/>
            <person name="Glasner J.D."/>
            <person name="Rose D.J."/>
            <person name="Mayhew G.F."/>
            <person name="Evans P.S."/>
            <person name="Gregor J."/>
            <person name="Kirkpatrick H.A."/>
            <person name="Posfai G."/>
            <person name="Hackett J."/>
            <person name="Klink S."/>
            <person name="Boutin A."/>
            <person name="Shao Y."/>
            <person name="Miller L."/>
            <person name="Grotbeck E.J."/>
            <person name="Davis N.W."/>
            <person name="Lim A."/>
            <person name="Dimalanta E.T."/>
            <person name="Potamousis K."/>
            <person name="Apodaca J."/>
            <person name="Anantharaman T.S."/>
            <person name="Lin J."/>
            <person name="Yen G."/>
            <person name="Schwartz D.C."/>
            <person name="Welch R.A."/>
            <person name="Blattner F.R."/>
        </authorList>
    </citation>
    <scope>NUCLEOTIDE SEQUENCE [LARGE SCALE GENOMIC DNA]</scope>
    <source>
        <strain>O157:H7 / EDL933 / ATCC 700927 / EHEC</strain>
    </source>
</reference>
<reference key="2">
    <citation type="journal article" date="2001" name="DNA Res.">
        <title>Complete genome sequence of enterohemorrhagic Escherichia coli O157:H7 and genomic comparison with a laboratory strain K-12.</title>
        <authorList>
            <person name="Hayashi T."/>
            <person name="Makino K."/>
            <person name="Ohnishi M."/>
            <person name="Kurokawa K."/>
            <person name="Ishii K."/>
            <person name="Yokoyama K."/>
            <person name="Han C.-G."/>
            <person name="Ohtsubo E."/>
            <person name="Nakayama K."/>
            <person name="Murata T."/>
            <person name="Tanaka M."/>
            <person name="Tobe T."/>
            <person name="Iida T."/>
            <person name="Takami H."/>
            <person name="Honda T."/>
            <person name="Sasakawa C."/>
            <person name="Ogasawara N."/>
            <person name="Yasunaga T."/>
            <person name="Kuhara S."/>
            <person name="Shiba T."/>
            <person name="Hattori M."/>
            <person name="Shinagawa H."/>
        </authorList>
    </citation>
    <scope>NUCLEOTIDE SEQUENCE [LARGE SCALE GENOMIC DNA]</scope>
    <source>
        <strain>O157:H7 / Sakai / RIMD 0509952 / EHEC</strain>
    </source>
</reference>
<gene>
    <name type="primary">qmcA</name>
    <name type="ordered locus">Z0642</name>
    <name type="ordered locus">ECs0552</name>
</gene>
<feature type="chain" id="PRO_0000094058" description="Protein QmcA">
    <location>
        <begin position="1"/>
        <end position="305"/>
    </location>
</feature>
<feature type="transmembrane region" description="Helical" evidence="1">
    <location>
        <begin position="3"/>
        <end position="23"/>
    </location>
</feature>
<name>QMCA_ECO57</name>
<comment type="subcellular location">
    <subcellularLocation>
        <location evidence="2">Membrane</location>
        <topology evidence="2">Single-pass membrane protein</topology>
    </subcellularLocation>
</comment>
<comment type="similarity">
    <text evidence="2">Belongs to the band 7/mec-2 family.</text>
</comment>